<accession>W5XDM0</accession>
<feature type="signal peptide" evidence="2">
    <location>
        <begin position="1"/>
        <end position="23"/>
    </location>
</feature>
<feature type="chain" id="PRO_0000430178" description="Snaclec lebecin subunit alpha">
    <location>
        <begin position="24"/>
        <end position="152"/>
    </location>
</feature>
<feature type="domain" description="C-type lectin" evidence="1">
    <location>
        <begin position="34"/>
        <end position="148"/>
    </location>
</feature>
<feature type="disulfide bond" evidence="1">
    <location>
        <begin position="27"/>
        <end position="38"/>
    </location>
</feature>
<feature type="disulfide bond" evidence="1">
    <location>
        <begin position="54"/>
        <end position="147"/>
    </location>
</feature>
<feature type="disulfide bond" description="Interchain (with C-102 in subunit beta)" evidence="1">
    <location>
        <position position="101"/>
    </location>
</feature>
<feature type="disulfide bond" evidence="1">
    <location>
        <begin position="122"/>
        <end position="139"/>
    </location>
</feature>
<sequence>MGRSISVSFGLLVVFLSLSGTGADQDCLPGWSFYEGGCYYVFDVKTWEDAEKFCQKQSNGKHLATIEWLGKANFVADLVTLNSDPRLDWIGLRVEDKRQQCSSHWTDGSAVSYENVVHNTKCFGLDQKTGYRTWVALRCELAYHFICSRVPR</sequence>
<keyword id="KW-1217">Cell adhesion impairing toxin</keyword>
<keyword id="KW-0903">Direct protein sequencing</keyword>
<keyword id="KW-1015">Disulfide bond</keyword>
<keyword id="KW-0964">Secreted</keyword>
<keyword id="KW-0732">Signal</keyword>
<keyword id="KW-0800">Toxin</keyword>
<protein>
    <recommendedName>
        <fullName evidence="3">Snaclec lebecin subunit alpha</fullName>
    </recommendedName>
</protein>
<dbReference type="EMBL" id="KF836491">
    <property type="protein sequence ID" value="AHI10992.1"/>
    <property type="molecule type" value="mRNA"/>
</dbReference>
<dbReference type="SMR" id="W5XDM0"/>
<dbReference type="GO" id="GO:0005576">
    <property type="term" value="C:extracellular region"/>
    <property type="evidence" value="ECO:0007669"/>
    <property type="project" value="UniProtKB-SubCell"/>
</dbReference>
<dbReference type="GO" id="GO:0090729">
    <property type="term" value="F:toxin activity"/>
    <property type="evidence" value="ECO:0007669"/>
    <property type="project" value="UniProtKB-KW"/>
</dbReference>
<dbReference type="FunFam" id="3.10.100.10:FF:000087">
    <property type="entry name" value="Snaclec rhodocetin subunit delta"/>
    <property type="match status" value="1"/>
</dbReference>
<dbReference type="Gene3D" id="3.10.100.10">
    <property type="entry name" value="Mannose-Binding Protein A, subunit A"/>
    <property type="match status" value="1"/>
</dbReference>
<dbReference type="InterPro" id="IPR001304">
    <property type="entry name" value="C-type_lectin-like"/>
</dbReference>
<dbReference type="InterPro" id="IPR016186">
    <property type="entry name" value="C-type_lectin-like/link_sf"/>
</dbReference>
<dbReference type="InterPro" id="IPR050111">
    <property type="entry name" value="C-type_lectin/snaclec_domain"/>
</dbReference>
<dbReference type="InterPro" id="IPR016187">
    <property type="entry name" value="CTDL_fold"/>
</dbReference>
<dbReference type="PANTHER" id="PTHR22803">
    <property type="entry name" value="MANNOSE, PHOSPHOLIPASE, LECTIN RECEPTOR RELATED"/>
    <property type="match status" value="1"/>
</dbReference>
<dbReference type="Pfam" id="PF00059">
    <property type="entry name" value="Lectin_C"/>
    <property type="match status" value="1"/>
</dbReference>
<dbReference type="SMART" id="SM00034">
    <property type="entry name" value="CLECT"/>
    <property type="match status" value="1"/>
</dbReference>
<dbReference type="SUPFAM" id="SSF56436">
    <property type="entry name" value="C-type lectin-like"/>
    <property type="match status" value="1"/>
</dbReference>
<dbReference type="PROSITE" id="PS50041">
    <property type="entry name" value="C_TYPE_LECTIN_2"/>
    <property type="match status" value="1"/>
</dbReference>
<reference key="1">
    <citation type="journal article" date="2014" name="Toxicon">
        <title>Lebecin, a new C-type lectin like protein from Macrovipera lebetina venom with anti-tumor activity against the breast cancer cell line MDA-MB231.</title>
        <authorList>
            <person name="Jebali J."/>
            <person name="Fakhfekh E."/>
            <person name="Morgen M."/>
            <person name="Srairi-Abid N."/>
            <person name="Majdoub H."/>
            <person name="Gargouri A."/>
            <person name="El Ayeb M."/>
            <person name="Luis J."/>
            <person name="Marrakchi N."/>
            <person name="Sarray S."/>
        </authorList>
    </citation>
    <scope>NUCLEOTIDE SEQUENCE [MRNA]</scope>
    <scope>PROTEIN SEQUENCE OF 24-44</scope>
    <scope>FUNCTION</scope>
    <scope>SUBUNIT</scope>
    <scope>MASS SPECTROMETRY</scope>
    <scope>SUBCELLULAR LOCATION</scope>
    <scope>3D-STRUCTURE MODELING</scope>
    <source>
        <tissue>Venom</tissue>
        <tissue>Venom gland</tissue>
    </source>
</reference>
<name>SLCIA_MACLB</name>
<proteinExistence type="evidence at protein level"/>
<comment type="function">
    <text evidence="2">Inhibits human breast cancer cells (MDA-MB231) migration and proliferation, as well as their adhesion to fibrinogen and fibronectin. This inhibition may be due to the binding to receptors of the integrin family, probably alpha-v/beta-3 (ITGAV/ITGB3) (40% inhibition of cell adhesion) and alpha-5/beta-1 (ITGA5/ITGB1) (by comparison with lebectin).</text>
</comment>
<comment type="subunit">
    <text evidence="2">Heterodimer with the beta subunit (AC W5XCJ6); disulfide-linked.</text>
</comment>
<comment type="subcellular location">
    <subcellularLocation>
        <location evidence="2">Secreted</location>
    </subcellularLocation>
</comment>
<comment type="tissue specificity">
    <text evidence="5">Expressed by the venom gland.</text>
</comment>
<comment type="mass spectrometry"/>
<comment type="similarity">
    <text evidence="4">Belongs to the snaclec family.</text>
</comment>
<evidence type="ECO:0000255" key="1">
    <source>
        <dbReference type="PROSITE-ProRule" id="PRU00040"/>
    </source>
</evidence>
<evidence type="ECO:0000269" key="2">
    <source>
    </source>
</evidence>
<evidence type="ECO:0000303" key="3">
    <source>
    </source>
</evidence>
<evidence type="ECO:0000305" key="4"/>
<evidence type="ECO:0000305" key="5">
    <source>
    </source>
</evidence>
<organism>
    <name type="scientific">Macrovipera lebetinus</name>
    <name type="common">Levantine viper</name>
    <name type="synonym">Vipera lebetina</name>
    <dbReference type="NCBI Taxonomy" id="3148341"/>
    <lineage>
        <taxon>Eukaryota</taxon>
        <taxon>Metazoa</taxon>
        <taxon>Chordata</taxon>
        <taxon>Craniata</taxon>
        <taxon>Vertebrata</taxon>
        <taxon>Euteleostomi</taxon>
        <taxon>Lepidosauria</taxon>
        <taxon>Squamata</taxon>
        <taxon>Bifurcata</taxon>
        <taxon>Unidentata</taxon>
        <taxon>Episquamata</taxon>
        <taxon>Toxicofera</taxon>
        <taxon>Serpentes</taxon>
        <taxon>Colubroidea</taxon>
        <taxon>Viperidae</taxon>
        <taxon>Viperinae</taxon>
        <taxon>Macrovipera</taxon>
    </lineage>
</organism>